<comment type="function">
    <text evidence="1">F(1)F(0) ATP synthase produces ATP from ADP in the presence of a proton or sodium gradient. F-type ATPases consist of two structural domains, F(1) containing the extramembraneous catalytic core and F(0) containing the membrane proton channel, linked together by a central stalk and a peripheral stalk. During catalysis, ATP synthesis in the catalytic domain of F(1) is coupled via a rotary mechanism of the central stalk subunits to proton translocation.</text>
</comment>
<comment type="function">
    <text evidence="1">Key component of the F(0) channel; it plays a direct role in translocation across the membrane. A homomeric c-ring of between 10-14 subunits forms the central stalk rotor element with the F(1) delta and epsilon subunits.</text>
</comment>
<comment type="subunit">
    <text evidence="1">F-type ATPases have 2 components, F(1) - the catalytic core - and F(0) - the membrane proton channel. F(1) has five subunits: alpha(3), beta(3), gamma(1), delta(1), epsilon(1). F(0) has three main subunits: a(1), b(2) and c(10-14). The alpha and beta chains form an alternating ring which encloses part of the gamma chain. F(1) is attached to F(0) by a central stalk formed by the gamma and epsilon chains, while a peripheral stalk is formed by the delta and b chains.</text>
</comment>
<comment type="subcellular location">
    <subcellularLocation>
        <location evidence="1">Cell inner membrane</location>
        <topology evidence="1">Multi-pass membrane protein</topology>
    </subcellularLocation>
</comment>
<comment type="similarity">
    <text evidence="1">Belongs to the ATPase C chain family.</text>
</comment>
<sequence>MEGNIQLALICVGAALSIGLAGLGAGIGIGSVGQGACMGLARNPEVQPKLMVFMILGMALAESIAIYGLVISLILLYANPLLG</sequence>
<dbReference type="EMBL" id="CR522870">
    <property type="protein sequence ID" value="CAG35545.1"/>
    <property type="molecule type" value="Genomic_DNA"/>
</dbReference>
<dbReference type="RefSeq" id="WP_011188061.1">
    <property type="nucleotide sequence ID" value="NC_006138.1"/>
</dbReference>
<dbReference type="SMR" id="Q6AQ28"/>
<dbReference type="STRING" id="177439.DP0816"/>
<dbReference type="KEGG" id="dps:DP0816"/>
<dbReference type="eggNOG" id="COG0636">
    <property type="taxonomic scope" value="Bacteria"/>
</dbReference>
<dbReference type="HOGENOM" id="CLU_148047_2_1_7"/>
<dbReference type="OrthoDB" id="5296711at2"/>
<dbReference type="Proteomes" id="UP000000602">
    <property type="component" value="Chromosome"/>
</dbReference>
<dbReference type="GO" id="GO:0005886">
    <property type="term" value="C:plasma membrane"/>
    <property type="evidence" value="ECO:0007669"/>
    <property type="project" value="UniProtKB-SubCell"/>
</dbReference>
<dbReference type="GO" id="GO:0045259">
    <property type="term" value="C:proton-transporting ATP synthase complex"/>
    <property type="evidence" value="ECO:0007669"/>
    <property type="project" value="UniProtKB-KW"/>
</dbReference>
<dbReference type="GO" id="GO:0033177">
    <property type="term" value="C:proton-transporting two-sector ATPase complex, proton-transporting domain"/>
    <property type="evidence" value="ECO:0007669"/>
    <property type="project" value="InterPro"/>
</dbReference>
<dbReference type="GO" id="GO:0008289">
    <property type="term" value="F:lipid binding"/>
    <property type="evidence" value="ECO:0007669"/>
    <property type="project" value="UniProtKB-KW"/>
</dbReference>
<dbReference type="GO" id="GO:0046933">
    <property type="term" value="F:proton-transporting ATP synthase activity, rotational mechanism"/>
    <property type="evidence" value="ECO:0007669"/>
    <property type="project" value="UniProtKB-UniRule"/>
</dbReference>
<dbReference type="CDD" id="cd18121">
    <property type="entry name" value="ATP-synt_Fo_c"/>
    <property type="match status" value="1"/>
</dbReference>
<dbReference type="FunFam" id="1.20.20.10:FF:000002">
    <property type="entry name" value="ATP synthase subunit c"/>
    <property type="match status" value="1"/>
</dbReference>
<dbReference type="Gene3D" id="1.20.20.10">
    <property type="entry name" value="F1F0 ATP synthase subunit C"/>
    <property type="match status" value="1"/>
</dbReference>
<dbReference type="HAMAP" id="MF_01396">
    <property type="entry name" value="ATP_synth_c_bact"/>
    <property type="match status" value="1"/>
</dbReference>
<dbReference type="InterPro" id="IPR005953">
    <property type="entry name" value="ATP_synth_csu_bac/chlpt"/>
</dbReference>
<dbReference type="InterPro" id="IPR000454">
    <property type="entry name" value="ATP_synth_F0_csu"/>
</dbReference>
<dbReference type="InterPro" id="IPR020537">
    <property type="entry name" value="ATP_synth_F0_csu_DDCD_BS"/>
</dbReference>
<dbReference type="InterPro" id="IPR038662">
    <property type="entry name" value="ATP_synth_F0_csu_sf"/>
</dbReference>
<dbReference type="InterPro" id="IPR002379">
    <property type="entry name" value="ATPase_proteolipid_c-like_dom"/>
</dbReference>
<dbReference type="InterPro" id="IPR035921">
    <property type="entry name" value="F/V-ATP_Csub_sf"/>
</dbReference>
<dbReference type="NCBIfam" id="TIGR01260">
    <property type="entry name" value="ATP_synt_c"/>
    <property type="match status" value="1"/>
</dbReference>
<dbReference type="PANTHER" id="PTHR10031">
    <property type="entry name" value="ATP SYNTHASE LIPID-BINDING PROTEIN, MITOCHONDRIAL"/>
    <property type="match status" value="1"/>
</dbReference>
<dbReference type="PANTHER" id="PTHR10031:SF0">
    <property type="entry name" value="ATPASE PROTEIN 9"/>
    <property type="match status" value="1"/>
</dbReference>
<dbReference type="Pfam" id="PF00137">
    <property type="entry name" value="ATP-synt_C"/>
    <property type="match status" value="1"/>
</dbReference>
<dbReference type="PRINTS" id="PR00124">
    <property type="entry name" value="ATPASEC"/>
</dbReference>
<dbReference type="SUPFAM" id="SSF81333">
    <property type="entry name" value="F1F0 ATP synthase subunit C"/>
    <property type="match status" value="1"/>
</dbReference>
<dbReference type="PROSITE" id="PS00605">
    <property type="entry name" value="ATPASE_C"/>
    <property type="match status" value="1"/>
</dbReference>
<reference key="1">
    <citation type="journal article" date="2004" name="Environ. Microbiol.">
        <title>The genome of Desulfotalea psychrophila, a sulfate-reducing bacterium from permanently cold Arctic sediments.</title>
        <authorList>
            <person name="Rabus R."/>
            <person name="Ruepp A."/>
            <person name="Frickey T."/>
            <person name="Rattei T."/>
            <person name="Fartmann B."/>
            <person name="Stark M."/>
            <person name="Bauer M."/>
            <person name="Zibat A."/>
            <person name="Lombardot T."/>
            <person name="Becker I."/>
            <person name="Amann J."/>
            <person name="Gellner K."/>
            <person name="Teeling H."/>
            <person name="Leuschner W.D."/>
            <person name="Gloeckner F.-O."/>
            <person name="Lupas A.N."/>
            <person name="Amann R."/>
            <person name="Klenk H.-P."/>
        </authorList>
    </citation>
    <scope>NUCLEOTIDE SEQUENCE [LARGE SCALE GENOMIC DNA]</scope>
    <source>
        <strain>DSM 12343 / LSv54</strain>
    </source>
</reference>
<organism>
    <name type="scientific">Desulfotalea psychrophila (strain LSv54 / DSM 12343)</name>
    <dbReference type="NCBI Taxonomy" id="177439"/>
    <lineage>
        <taxon>Bacteria</taxon>
        <taxon>Pseudomonadati</taxon>
        <taxon>Thermodesulfobacteriota</taxon>
        <taxon>Desulfobulbia</taxon>
        <taxon>Desulfobulbales</taxon>
        <taxon>Desulfocapsaceae</taxon>
        <taxon>Desulfotalea</taxon>
    </lineage>
</organism>
<protein>
    <recommendedName>
        <fullName evidence="1">ATP synthase subunit c</fullName>
    </recommendedName>
    <alternativeName>
        <fullName evidence="1">ATP synthase F(0) sector subunit c</fullName>
    </alternativeName>
    <alternativeName>
        <fullName evidence="1">F-type ATPase subunit c</fullName>
        <shortName evidence="1">F-ATPase subunit c</shortName>
    </alternativeName>
    <alternativeName>
        <fullName evidence="1">Lipid-binding protein</fullName>
    </alternativeName>
</protein>
<keyword id="KW-0066">ATP synthesis</keyword>
<keyword id="KW-0997">Cell inner membrane</keyword>
<keyword id="KW-1003">Cell membrane</keyword>
<keyword id="KW-0138">CF(0)</keyword>
<keyword id="KW-0375">Hydrogen ion transport</keyword>
<keyword id="KW-0406">Ion transport</keyword>
<keyword id="KW-0446">Lipid-binding</keyword>
<keyword id="KW-0472">Membrane</keyword>
<keyword id="KW-1185">Reference proteome</keyword>
<keyword id="KW-0812">Transmembrane</keyword>
<keyword id="KW-1133">Transmembrane helix</keyword>
<keyword id="KW-0813">Transport</keyword>
<accession>Q6AQ28</accession>
<feature type="chain" id="PRO_0000365881" description="ATP synthase subunit c">
    <location>
        <begin position="1"/>
        <end position="83"/>
    </location>
</feature>
<feature type="transmembrane region" description="Helical" evidence="1">
    <location>
        <begin position="9"/>
        <end position="29"/>
    </location>
</feature>
<feature type="transmembrane region" description="Helical" evidence="1">
    <location>
        <begin position="51"/>
        <end position="71"/>
    </location>
</feature>
<feature type="site" description="Reversibly protonated during proton transport" evidence="1">
    <location>
        <position position="62"/>
    </location>
</feature>
<gene>
    <name evidence="1" type="primary">atpE</name>
    <name type="ordered locus">DP0816</name>
</gene>
<name>ATPL_DESPS</name>
<evidence type="ECO:0000255" key="1">
    <source>
        <dbReference type="HAMAP-Rule" id="MF_01396"/>
    </source>
</evidence>
<proteinExistence type="inferred from homology"/>